<dbReference type="EMBL" id="L77117">
    <property type="protein sequence ID" value="AAB98995.1"/>
    <property type="molecule type" value="Genomic_DNA"/>
</dbReference>
<dbReference type="PIR" id="B64423">
    <property type="entry name" value="B64423"/>
</dbReference>
<dbReference type="SMR" id="Q58393"/>
<dbReference type="STRING" id="243232.MJ_0986"/>
<dbReference type="PaxDb" id="243232-MJ_0986"/>
<dbReference type="EnsemblBacteria" id="AAB98995">
    <property type="protein sequence ID" value="AAB98995"/>
    <property type="gene ID" value="MJ_0986"/>
</dbReference>
<dbReference type="KEGG" id="mja:MJ_0986"/>
<dbReference type="eggNOG" id="arCOG07514">
    <property type="taxonomic scope" value="Archaea"/>
</dbReference>
<dbReference type="HOGENOM" id="CLU_202286_0_0_2"/>
<dbReference type="InParanoid" id="Q58393"/>
<dbReference type="Proteomes" id="UP000000805">
    <property type="component" value="Chromosome"/>
</dbReference>
<reference key="1">
    <citation type="journal article" date="1996" name="Science">
        <title>Complete genome sequence of the methanogenic archaeon, Methanococcus jannaschii.</title>
        <authorList>
            <person name="Bult C.J."/>
            <person name="White O."/>
            <person name="Olsen G.J."/>
            <person name="Zhou L."/>
            <person name="Fleischmann R.D."/>
            <person name="Sutton G.G."/>
            <person name="Blake J.A."/>
            <person name="FitzGerald L.M."/>
            <person name="Clayton R.A."/>
            <person name="Gocayne J.D."/>
            <person name="Kerlavage A.R."/>
            <person name="Dougherty B.A."/>
            <person name="Tomb J.-F."/>
            <person name="Adams M.D."/>
            <person name="Reich C.I."/>
            <person name="Overbeek R."/>
            <person name="Kirkness E.F."/>
            <person name="Weinstock K.G."/>
            <person name="Merrick J.M."/>
            <person name="Glodek A."/>
            <person name="Scott J.L."/>
            <person name="Geoghagen N.S.M."/>
            <person name="Weidman J.F."/>
            <person name="Fuhrmann J.L."/>
            <person name="Nguyen D."/>
            <person name="Utterback T.R."/>
            <person name="Kelley J.M."/>
            <person name="Peterson J.D."/>
            <person name="Sadow P.W."/>
            <person name="Hanna M.C."/>
            <person name="Cotton M.D."/>
            <person name="Roberts K.M."/>
            <person name="Hurst M.A."/>
            <person name="Kaine B.P."/>
            <person name="Borodovsky M."/>
            <person name="Klenk H.-P."/>
            <person name="Fraser C.M."/>
            <person name="Smith H.O."/>
            <person name="Woese C.R."/>
            <person name="Venter J.C."/>
        </authorList>
    </citation>
    <scope>NUCLEOTIDE SEQUENCE [LARGE SCALE GENOMIC DNA]</scope>
    <source>
        <strain>ATCC 43067 / DSM 2661 / JAL-1 / JCM 10045 / NBRC 100440</strain>
    </source>
</reference>
<gene>
    <name type="ordered locus">MJ0986</name>
</gene>
<organism>
    <name type="scientific">Methanocaldococcus jannaschii (strain ATCC 43067 / DSM 2661 / JAL-1 / JCM 10045 / NBRC 100440)</name>
    <name type="common">Methanococcus jannaschii</name>
    <dbReference type="NCBI Taxonomy" id="243232"/>
    <lineage>
        <taxon>Archaea</taxon>
        <taxon>Methanobacteriati</taxon>
        <taxon>Methanobacteriota</taxon>
        <taxon>Methanomada group</taxon>
        <taxon>Methanococci</taxon>
        <taxon>Methanococcales</taxon>
        <taxon>Methanocaldococcaceae</taxon>
        <taxon>Methanocaldococcus</taxon>
    </lineage>
</organism>
<keyword id="KW-1185">Reference proteome</keyword>
<protein>
    <recommendedName>
        <fullName>Uncharacterized protein MJ0986</fullName>
    </recommendedName>
</protein>
<sequence length="75" mass="8731">MCLICVLGEYIMTQREKDNNIKRVQVTFTKSQWELIENFRGILGQTDAEIVRTIVLTWLSEKSIITTIKKEIGDK</sequence>
<name>Y986_METJA</name>
<feature type="chain" id="PRO_0000107130" description="Uncharacterized protein MJ0986">
    <location>
        <begin position="1"/>
        <end position="75"/>
    </location>
</feature>
<accession>Q58393</accession>
<proteinExistence type="predicted"/>